<accession>Q67205</accession>
<proteinExistence type="inferred from homology"/>
<dbReference type="EMBL" id="M63532">
    <property type="protein sequence ID" value="AAA43339.1"/>
    <property type="molecule type" value="Genomic_RNA"/>
</dbReference>
<dbReference type="SMR" id="Q67205"/>
<dbReference type="GlyCosmos" id="Q67205">
    <property type="glycosylation" value="1 site, No reported glycans"/>
</dbReference>
<dbReference type="GO" id="GO:0020002">
    <property type="term" value="C:host cell plasma membrane"/>
    <property type="evidence" value="ECO:0007669"/>
    <property type="project" value="UniProtKB-SubCell"/>
</dbReference>
<dbReference type="GO" id="GO:0016020">
    <property type="term" value="C:membrane"/>
    <property type="evidence" value="ECO:0007669"/>
    <property type="project" value="UniProtKB-UniRule"/>
</dbReference>
<dbReference type="GO" id="GO:0055036">
    <property type="term" value="C:virion membrane"/>
    <property type="evidence" value="ECO:0007669"/>
    <property type="project" value="UniProtKB-SubCell"/>
</dbReference>
<dbReference type="GO" id="GO:0005216">
    <property type="term" value="F:monoatomic ion channel activity"/>
    <property type="evidence" value="ECO:0007669"/>
    <property type="project" value="UniProtKB-UniRule"/>
</dbReference>
<dbReference type="GO" id="GO:0015078">
    <property type="term" value="F:proton transmembrane transporter activity"/>
    <property type="evidence" value="ECO:0007669"/>
    <property type="project" value="UniProtKB-UniRule"/>
</dbReference>
<dbReference type="GO" id="GO:0051259">
    <property type="term" value="P:protein complex oligomerization"/>
    <property type="evidence" value="ECO:0007669"/>
    <property type="project" value="UniProtKB-UniRule"/>
</dbReference>
<dbReference type="GO" id="GO:0044694">
    <property type="term" value="P:symbiont genome entry into host cell via pore formation in plasma membrane"/>
    <property type="evidence" value="ECO:0007669"/>
    <property type="project" value="UniProtKB-UniRule"/>
</dbReference>
<dbReference type="GO" id="GO:0140321">
    <property type="term" value="P:symbiont-mediated suppression of host autophagy"/>
    <property type="evidence" value="ECO:0007669"/>
    <property type="project" value="UniProtKB-KW"/>
</dbReference>
<dbReference type="Gene3D" id="6.10.250.1640">
    <property type="match status" value="1"/>
</dbReference>
<dbReference type="HAMAP" id="MF_04069">
    <property type="entry name" value="INFV_M2"/>
    <property type="match status" value="1"/>
</dbReference>
<dbReference type="InterPro" id="IPR002089">
    <property type="entry name" value="Flu_M2"/>
</dbReference>
<dbReference type="Pfam" id="PF00599">
    <property type="entry name" value="Flu_M2"/>
    <property type="match status" value="1"/>
</dbReference>
<feature type="chain" id="PRO_0000326359" description="Matrix protein 2">
    <location>
        <begin position="1"/>
        <end position="97"/>
    </location>
</feature>
<feature type="topological domain" description="Virion surface" evidence="1">
    <location>
        <begin position="1"/>
        <end position="22"/>
    </location>
</feature>
<feature type="transmembrane region" description="Helical; Signal-anchor for type III membrane protein" evidence="1">
    <location>
        <begin position="23"/>
        <end position="43"/>
    </location>
</feature>
<feature type="topological domain" description="Intravirion" evidence="1">
    <location>
        <begin position="44"/>
        <end position="97"/>
    </location>
</feature>
<feature type="region of interest" description="Disordered" evidence="2">
    <location>
        <begin position="60"/>
        <end position="84"/>
    </location>
</feature>
<feature type="site" description="Essential for channel activity, possibly by being protonated during channel activation, and by forming the channel gate and the selective filter" evidence="1">
    <location>
        <position position="37"/>
    </location>
</feature>
<feature type="site" description="Seems to be involved in pH gating" evidence="1">
    <location>
        <position position="41"/>
    </location>
</feature>
<feature type="modified residue" description="Phosphoserine; by host" evidence="1">
    <location>
        <position position="64"/>
    </location>
</feature>
<feature type="modified residue" description="Phosphoserine; by host" evidence="1">
    <location>
        <position position="82"/>
    </location>
</feature>
<feature type="lipid moiety-binding region" description="S-palmitoyl cysteine; by host" evidence="1">
    <location>
        <position position="50"/>
    </location>
</feature>
<feature type="glycosylation site" description="N-linked (GlcNAc...) asparagine; by host" evidence="1">
    <location>
        <position position="20"/>
    </location>
</feature>
<feature type="disulfide bond" description="Interchain (with C-17)" evidence="1">
    <location>
        <position position="17"/>
    </location>
</feature>
<feature type="disulfide bond" description="Interchain (with C-19)" evidence="1">
    <location>
        <position position="19"/>
    </location>
</feature>
<protein>
    <recommendedName>
        <fullName evidence="1">Matrix protein 2</fullName>
    </recommendedName>
    <alternativeName>
        <fullName evidence="1">Proton channel protein M2</fullName>
    </alternativeName>
</protein>
<organismHost>
    <name type="scientific">Aves</name>
    <dbReference type="NCBI Taxonomy" id="8782"/>
</organismHost>
<organismHost>
    <name type="scientific">Homo sapiens</name>
    <name type="common">Human</name>
    <dbReference type="NCBI Taxonomy" id="9606"/>
</organismHost>
<organismHost>
    <name type="scientific">Sus scrofa</name>
    <name type="common">Pig</name>
    <dbReference type="NCBI Taxonomy" id="9823"/>
</organismHost>
<organism>
    <name type="scientific">Influenza A virus (strain A/Swine/Tennessee/24/1977 H1N1)</name>
    <dbReference type="NCBI Taxonomy" id="385606"/>
    <lineage>
        <taxon>Viruses</taxon>
        <taxon>Riboviria</taxon>
        <taxon>Orthornavirae</taxon>
        <taxon>Negarnaviricota</taxon>
        <taxon>Polyploviricotina</taxon>
        <taxon>Insthoviricetes</taxon>
        <taxon>Articulavirales</taxon>
        <taxon>Orthomyxoviridae</taxon>
        <taxon>Alphainfluenzavirus</taxon>
        <taxon>Alphainfluenzavirus influenzae</taxon>
        <taxon>Influenza A virus</taxon>
    </lineage>
</organism>
<gene>
    <name evidence="1" type="primary">M</name>
</gene>
<sequence length="97" mass="11075">MSLLTEVETPIRSEWGCRCNDSGDPLVAAASIIGILHLILWILDRLFFKCIHRRFKYGLKRGPSTEGVPESMREEYRQKQQSAVDVDDGHFVNIALE</sequence>
<keyword id="KW-0025">Alternative splicing</keyword>
<keyword id="KW-1015">Disulfide bond</keyword>
<keyword id="KW-0325">Glycoprotein</keyword>
<keyword id="KW-1032">Host cell membrane</keyword>
<keyword id="KW-1043">Host membrane</keyword>
<keyword id="KW-0945">Host-virus interaction</keyword>
<keyword id="KW-0375">Hydrogen ion transport</keyword>
<keyword id="KW-1083">Inhibition of host autophagy by virus</keyword>
<keyword id="KW-0407">Ion channel</keyword>
<keyword id="KW-0406">Ion transport</keyword>
<keyword id="KW-0449">Lipoprotein</keyword>
<keyword id="KW-0472">Membrane</keyword>
<keyword id="KW-0564">Palmitate</keyword>
<keyword id="KW-0597">Phosphoprotein</keyword>
<keyword id="KW-0735">Signal-anchor</keyword>
<keyword id="KW-0812">Transmembrane</keyword>
<keyword id="KW-1133">Transmembrane helix</keyword>
<keyword id="KW-0813">Transport</keyword>
<keyword id="KW-1182">Viral ion channel</keyword>
<keyword id="KW-0946">Virion</keyword>
<reference key="1">
    <citation type="journal article" date="1991" name="J. Virol.">
        <title>Evolutionary analysis of the influenza A virus M gene with comparison of the M1 and M2 proteins.</title>
        <authorList>
            <person name="Ito T."/>
            <person name="Gorman O.T."/>
            <person name="Kawaoka Y."/>
            <person name="Bean W.J."/>
            <person name="Webster R.G."/>
        </authorList>
    </citation>
    <scope>NUCLEOTIDE SEQUENCE [GENOMIC RNA]</scope>
</reference>
<comment type="function">
    <text evidence="1">Forms a proton-selective ion channel that is necessary for the efficient release of the viral genome during virus entry. After attaching to the cell surface, the virion enters the cell by endocytosis. Acidification of the endosome triggers M2 ion channel activity. The influx of protons into virion interior is believed to disrupt interactions between the viral ribonucleoprotein (RNP), matrix protein 1 (M1), and lipid bilayers, thereby freeing the viral genome from interaction with viral proteins and enabling RNA segments to migrate to the host cell nucleus, where influenza virus RNA transcription and replication occur. Also plays a role in viral proteins secretory pathway. Elevates the intravesicular pH of normally acidic compartments, such as trans-Golgi network, preventing newly formed hemagglutinin from premature switching to the fusion-active conformation.</text>
</comment>
<comment type="activity regulation">
    <text>The M2 protein from most influenza A strains is inhibited by amantadine and rimantadine, resulting in viral uncoating incapacity. Emergence of amantadine-resistant variants is usually rapid.</text>
</comment>
<comment type="subunit">
    <text evidence="1">Homotetramer; composed of two disulfide-linked dimers held together by non-covalent interactions. May interact with matrix protein 1.</text>
</comment>
<comment type="subcellular location">
    <subcellularLocation>
        <location evidence="1">Virion membrane</location>
    </subcellularLocation>
    <subcellularLocation>
        <location evidence="1">Host apical cell membrane</location>
        <topology evidence="1">Single-pass type III membrane protein</topology>
    </subcellularLocation>
    <text evidence="1">Abundantly expressed at the apical plasma membrane in infected polarized epithelial cells, in close proximity to budding and assembled virions. Minor component of virions (only 16-20 molecules/virion).</text>
</comment>
<comment type="alternative products">
    <event type="alternative splicing"/>
    <isoform>
        <id>Q67205-1</id>
        <name>M2</name>
        <sequence type="displayed"/>
    </isoform>
    <isoform>
        <id>Q89862-1</id>
        <name>M1</name>
        <sequence type="external"/>
    </isoform>
    <text>Only the first 9 residues are shared by the 2 isoforms.</text>
</comment>
<comment type="domain">
    <text evidence="1">Cytoplasmic tail plays an important role in virion assembly and morphogenesis.</text>
</comment>
<comment type="miscellaneous">
    <text evidence="1">When the channel is activated, one or more imidazole moieties of His-37 probably become bi-protonated.</text>
</comment>
<comment type="similarity">
    <text evidence="1">Belongs to the influenza viruses matrix protein M2 family.</text>
</comment>
<name>M2_I77AC</name>
<evidence type="ECO:0000255" key="1">
    <source>
        <dbReference type="HAMAP-Rule" id="MF_04069"/>
    </source>
</evidence>
<evidence type="ECO:0000256" key="2">
    <source>
        <dbReference type="SAM" id="MobiDB-lite"/>
    </source>
</evidence>